<comment type="function">
    <text evidence="1">Associates with aggregated proteins, together with IbpA, to stabilize and protect them from irreversible denaturation and extensive proteolysis during heat shock and oxidative stress. Aggregated proteins bound to the IbpAB complex are more efficiently refolded and reactivated by the ATP-dependent chaperone systems ClpB and DnaK/DnaJ/GrpE. Its activity is ATP-independent.</text>
</comment>
<comment type="subunit">
    <text evidence="1">Homodimer. Forms homomultimers of about 100-150 subunits at optimal growth temperatures. Conformation changes to oligomers at high temperatures or high ionic concentrations. The decrease in size of the multimers is accompanied by an increase in chaperone activity.</text>
</comment>
<comment type="subcellular location">
    <subcellularLocation>
        <location evidence="1">Cytoplasm</location>
    </subcellularLocation>
</comment>
<comment type="domain">
    <text evidence="1">The N- and C-terminal flexible termini are involved in oligomerization and in the binding of non-native substrate proteins, and are essential for chaperone activity.</text>
</comment>
<comment type="similarity">
    <text evidence="1 2">Belongs to the small heat shock protein (HSP20) family.</text>
</comment>
<accession>B6I3R9</accession>
<sequence length="142" mass="16093">MRNFDLSPLMRQWIGFDKLANALQNAGESQSFPPYNIEKSDDNHYRITLALAGFRQEDLEIQLEGTRLSVKGTPEQPKEEKKWLHQGLMNQPFSLSFTLAENMEVSGATFVNGLLHIDLIRNEPEPIAAQRIAISERPALNS</sequence>
<keyword id="KW-0143">Chaperone</keyword>
<keyword id="KW-0963">Cytoplasm</keyword>
<keyword id="KW-0346">Stress response</keyword>
<feature type="chain" id="PRO_1000189104" description="Small heat shock protein IbpB">
    <location>
        <begin position="1"/>
        <end position="142"/>
    </location>
</feature>
<feature type="domain" description="sHSP" evidence="2">
    <location>
        <begin position="26"/>
        <end position="137"/>
    </location>
</feature>
<reference key="1">
    <citation type="journal article" date="2008" name="DNA Res.">
        <title>Complete genome sequence and comparative analysis of the wild-type commensal Escherichia coli strain SE11 isolated from a healthy adult.</title>
        <authorList>
            <person name="Oshima K."/>
            <person name="Toh H."/>
            <person name="Ogura Y."/>
            <person name="Sasamoto H."/>
            <person name="Morita H."/>
            <person name="Park S.-H."/>
            <person name="Ooka T."/>
            <person name="Iyoda S."/>
            <person name="Taylor T.D."/>
            <person name="Hayashi T."/>
            <person name="Itoh K."/>
            <person name="Hattori M."/>
        </authorList>
    </citation>
    <scope>NUCLEOTIDE SEQUENCE [LARGE SCALE GENOMIC DNA]</scope>
    <source>
        <strain>SE11</strain>
    </source>
</reference>
<protein>
    <recommendedName>
        <fullName evidence="1">Small heat shock protein IbpB</fullName>
    </recommendedName>
    <alternativeName>
        <fullName evidence="1">16 kDa heat shock protein B</fullName>
    </alternativeName>
</protein>
<evidence type="ECO:0000255" key="1">
    <source>
        <dbReference type="HAMAP-Rule" id="MF_02001"/>
    </source>
</evidence>
<evidence type="ECO:0000255" key="2">
    <source>
        <dbReference type="PROSITE-ProRule" id="PRU00285"/>
    </source>
</evidence>
<proteinExistence type="inferred from homology"/>
<gene>
    <name evidence="1" type="primary">ibpB</name>
    <name type="ordered locus">ECSE_3972</name>
</gene>
<name>IBPB_ECOSE</name>
<dbReference type="EMBL" id="AP009240">
    <property type="protein sequence ID" value="BAG79496.1"/>
    <property type="molecule type" value="Genomic_DNA"/>
</dbReference>
<dbReference type="RefSeq" id="WP_001243431.1">
    <property type="nucleotide sequence ID" value="NC_011415.1"/>
</dbReference>
<dbReference type="SMR" id="B6I3R9"/>
<dbReference type="GeneID" id="93778427"/>
<dbReference type="KEGG" id="ecy:ECSE_3972"/>
<dbReference type="HOGENOM" id="CLU_046737_4_2_6"/>
<dbReference type="Proteomes" id="UP000008199">
    <property type="component" value="Chromosome"/>
</dbReference>
<dbReference type="GO" id="GO:0005737">
    <property type="term" value="C:cytoplasm"/>
    <property type="evidence" value="ECO:0007669"/>
    <property type="project" value="UniProtKB-SubCell"/>
</dbReference>
<dbReference type="GO" id="GO:0050821">
    <property type="term" value="P:protein stabilization"/>
    <property type="evidence" value="ECO:0007669"/>
    <property type="project" value="UniProtKB-UniRule"/>
</dbReference>
<dbReference type="CDD" id="cd06470">
    <property type="entry name" value="ACD_IbpA-B_like"/>
    <property type="match status" value="1"/>
</dbReference>
<dbReference type="FunFam" id="2.60.40.790:FF:000005">
    <property type="entry name" value="Small heat shock protein IbpB"/>
    <property type="match status" value="1"/>
</dbReference>
<dbReference type="Gene3D" id="2.60.40.790">
    <property type="match status" value="1"/>
</dbReference>
<dbReference type="HAMAP" id="MF_02001">
    <property type="entry name" value="HSP20_IbpB"/>
    <property type="match status" value="1"/>
</dbReference>
<dbReference type="InterPro" id="IPR002068">
    <property type="entry name" value="A-crystallin/Hsp20_dom"/>
</dbReference>
<dbReference type="InterPro" id="IPR037913">
    <property type="entry name" value="ACD_IbpA/B"/>
</dbReference>
<dbReference type="InterPro" id="IPR008978">
    <property type="entry name" value="HSP20-like_chaperone"/>
</dbReference>
<dbReference type="InterPro" id="IPR022848">
    <property type="entry name" value="HSP20_IbpB"/>
</dbReference>
<dbReference type="NCBIfam" id="NF008618">
    <property type="entry name" value="PRK11597.1"/>
    <property type="match status" value="1"/>
</dbReference>
<dbReference type="PANTHER" id="PTHR47062">
    <property type="match status" value="1"/>
</dbReference>
<dbReference type="PANTHER" id="PTHR47062:SF2">
    <property type="entry name" value="SMALL HEAT SHOCK PROTEIN IBPB"/>
    <property type="match status" value="1"/>
</dbReference>
<dbReference type="Pfam" id="PF00011">
    <property type="entry name" value="HSP20"/>
    <property type="match status" value="1"/>
</dbReference>
<dbReference type="SUPFAM" id="SSF49764">
    <property type="entry name" value="HSP20-like chaperones"/>
    <property type="match status" value="1"/>
</dbReference>
<dbReference type="PROSITE" id="PS01031">
    <property type="entry name" value="SHSP"/>
    <property type="match status" value="1"/>
</dbReference>
<organism>
    <name type="scientific">Escherichia coli (strain SE11)</name>
    <dbReference type="NCBI Taxonomy" id="409438"/>
    <lineage>
        <taxon>Bacteria</taxon>
        <taxon>Pseudomonadati</taxon>
        <taxon>Pseudomonadota</taxon>
        <taxon>Gammaproteobacteria</taxon>
        <taxon>Enterobacterales</taxon>
        <taxon>Enterobacteriaceae</taxon>
        <taxon>Escherichia</taxon>
    </lineage>
</organism>